<name>IF1_WIGBR</name>
<keyword id="KW-0963">Cytoplasm</keyword>
<keyword id="KW-0396">Initiation factor</keyword>
<keyword id="KW-0648">Protein biosynthesis</keyword>
<keyword id="KW-1185">Reference proteome</keyword>
<keyword id="KW-0694">RNA-binding</keyword>
<keyword id="KW-0699">rRNA-binding</keyword>
<protein>
    <recommendedName>
        <fullName evidence="1">Translation initiation factor IF-1</fullName>
    </recommendedName>
</protein>
<feature type="chain" id="PRO_0000095906" description="Translation initiation factor IF-1">
    <location>
        <begin position="1"/>
        <end position="72"/>
    </location>
</feature>
<feature type="domain" description="S1-like" evidence="1">
    <location>
        <begin position="1"/>
        <end position="72"/>
    </location>
</feature>
<gene>
    <name evidence="1" type="primary">infA</name>
    <name type="ordered locus">WIGBR2390</name>
</gene>
<accession>Q8D2W3</accession>
<evidence type="ECO:0000255" key="1">
    <source>
        <dbReference type="HAMAP-Rule" id="MF_00075"/>
    </source>
</evidence>
<dbReference type="EMBL" id="BA000021">
    <property type="protein sequence ID" value="BAC24385.1"/>
    <property type="molecule type" value="Genomic_DNA"/>
</dbReference>
<dbReference type="SMR" id="Q8D2W3"/>
<dbReference type="STRING" id="36870.gene:10368731"/>
<dbReference type="KEGG" id="wbr:infA"/>
<dbReference type="eggNOG" id="COG0361">
    <property type="taxonomic scope" value="Bacteria"/>
</dbReference>
<dbReference type="HOGENOM" id="CLU_151267_1_0_6"/>
<dbReference type="OrthoDB" id="9803250at2"/>
<dbReference type="Proteomes" id="UP000000562">
    <property type="component" value="Chromosome"/>
</dbReference>
<dbReference type="GO" id="GO:0005829">
    <property type="term" value="C:cytosol"/>
    <property type="evidence" value="ECO:0007669"/>
    <property type="project" value="TreeGrafter"/>
</dbReference>
<dbReference type="GO" id="GO:0043022">
    <property type="term" value="F:ribosome binding"/>
    <property type="evidence" value="ECO:0007669"/>
    <property type="project" value="UniProtKB-UniRule"/>
</dbReference>
<dbReference type="GO" id="GO:0019843">
    <property type="term" value="F:rRNA binding"/>
    <property type="evidence" value="ECO:0007669"/>
    <property type="project" value="UniProtKB-UniRule"/>
</dbReference>
<dbReference type="GO" id="GO:0003743">
    <property type="term" value="F:translation initiation factor activity"/>
    <property type="evidence" value="ECO:0007669"/>
    <property type="project" value="UniProtKB-UniRule"/>
</dbReference>
<dbReference type="CDD" id="cd04451">
    <property type="entry name" value="S1_IF1"/>
    <property type="match status" value="1"/>
</dbReference>
<dbReference type="FunFam" id="2.40.50.140:FF:000002">
    <property type="entry name" value="Translation initiation factor IF-1"/>
    <property type="match status" value="1"/>
</dbReference>
<dbReference type="Gene3D" id="2.40.50.140">
    <property type="entry name" value="Nucleic acid-binding proteins"/>
    <property type="match status" value="1"/>
</dbReference>
<dbReference type="HAMAP" id="MF_00075">
    <property type="entry name" value="IF_1"/>
    <property type="match status" value="1"/>
</dbReference>
<dbReference type="InterPro" id="IPR012340">
    <property type="entry name" value="NA-bd_OB-fold"/>
</dbReference>
<dbReference type="InterPro" id="IPR006196">
    <property type="entry name" value="RNA-binding_domain_S1_IF1"/>
</dbReference>
<dbReference type="InterPro" id="IPR003029">
    <property type="entry name" value="S1_domain"/>
</dbReference>
<dbReference type="InterPro" id="IPR004368">
    <property type="entry name" value="TIF_IF1"/>
</dbReference>
<dbReference type="NCBIfam" id="TIGR00008">
    <property type="entry name" value="infA"/>
    <property type="match status" value="1"/>
</dbReference>
<dbReference type="PANTHER" id="PTHR33370">
    <property type="entry name" value="TRANSLATION INITIATION FACTOR IF-1, CHLOROPLASTIC"/>
    <property type="match status" value="1"/>
</dbReference>
<dbReference type="PANTHER" id="PTHR33370:SF1">
    <property type="entry name" value="TRANSLATION INITIATION FACTOR IF-1, CHLOROPLASTIC"/>
    <property type="match status" value="1"/>
</dbReference>
<dbReference type="Pfam" id="PF01176">
    <property type="entry name" value="eIF-1a"/>
    <property type="match status" value="1"/>
</dbReference>
<dbReference type="SMART" id="SM00316">
    <property type="entry name" value="S1"/>
    <property type="match status" value="1"/>
</dbReference>
<dbReference type="SUPFAM" id="SSF50249">
    <property type="entry name" value="Nucleic acid-binding proteins"/>
    <property type="match status" value="1"/>
</dbReference>
<dbReference type="PROSITE" id="PS50832">
    <property type="entry name" value="S1_IF1_TYPE"/>
    <property type="match status" value="1"/>
</dbReference>
<reference key="1">
    <citation type="journal article" date="2002" name="Nat. Genet.">
        <title>Genome sequence of the endocellular obligate symbiont of tsetse flies, Wigglesworthia glossinidia.</title>
        <authorList>
            <person name="Akman L."/>
            <person name="Yamashita A."/>
            <person name="Watanabe H."/>
            <person name="Oshima K."/>
            <person name="Shiba T."/>
            <person name="Hattori M."/>
            <person name="Aksoy S."/>
        </authorList>
    </citation>
    <scope>NUCLEOTIDE SEQUENCE [LARGE SCALE GENOMIC DNA]</scope>
</reference>
<organism>
    <name type="scientific">Wigglesworthia glossinidia brevipalpis</name>
    <dbReference type="NCBI Taxonomy" id="36870"/>
    <lineage>
        <taxon>Bacteria</taxon>
        <taxon>Pseudomonadati</taxon>
        <taxon>Pseudomonadota</taxon>
        <taxon>Gammaproteobacteria</taxon>
        <taxon>Enterobacterales</taxon>
        <taxon>Erwiniaceae</taxon>
        <taxon>Wigglesworthia</taxon>
    </lineage>
</organism>
<proteinExistence type="inferred from homology"/>
<sequence>MTKEENIEMQGIVLDTLPNTMFKVELENKHVVLAHISGKMRKNYIRILTGDKVTVELTPYDLSKGRIIFRSR</sequence>
<comment type="function">
    <text evidence="1">One of the essential components for the initiation of protein synthesis. Stabilizes the binding of IF-2 and IF-3 on the 30S subunit to which N-formylmethionyl-tRNA(fMet) subsequently binds. Helps modulate mRNA selection, yielding the 30S pre-initiation complex (PIC). Upon addition of the 50S ribosomal subunit IF-1, IF-2 and IF-3 are released leaving the mature 70S translation initiation complex.</text>
</comment>
<comment type="subunit">
    <text evidence="1">Component of the 30S ribosomal translation pre-initiation complex which assembles on the 30S ribosome in the order IF-2 and IF-3, IF-1 and N-formylmethionyl-tRNA(fMet); mRNA recruitment can occur at any time during PIC assembly.</text>
</comment>
<comment type="subcellular location">
    <subcellularLocation>
        <location evidence="1">Cytoplasm</location>
    </subcellularLocation>
</comment>
<comment type="similarity">
    <text evidence="1">Belongs to the IF-1 family.</text>
</comment>